<sequence length="744" mass="79831">MPTESSSSEISGGGGGAIPMLRPSRMDQFMNSMAAAAAAVGGGGLPGAADRNGGSGGSDGGSQNGNGDSRNSSASRISAYETQLAYQQHLAGLHGPPPPPPPSHHREISAFVPVLPTGKVRPGSNSNYEIIAMMADKRKELALREAAAAAAMLGRGPGGPGGPGVPPPGVLYGPAGVPPPPYLTGPGPSPTGAGSFPFPPGAAAAALFPPGLGPGMHAGLDRRLLRAPGRASRPKKQFICKFCNRQFTKSYNLLIHERTHTDERPYSCDICGKAFRRQDHLRDHRYIHSKEKPFKCTECGKGFCQSRTLAVHKILHMEESPHKCPVCSRSFNQRSNLKTHLLTHTDHKPYECSSCGKVFRRNCDLRRHALTHAVGEVNSGDYVDVGEEDEARNLSGDEEDSLLEVDSPRQSPVHNLGESGGSGEKSESERMRLKRKAAIDHEESEEEFDDFDEEEELQDLPRVHDLPREEDDDFDPEDEEQAEVALVARFQASKAAATSQSSSSVGTKPERQGVTHCHHEGGETYTMRPHGEKHQEEPGNSGIASLPVPPSFVRYSVPPGAAGPPPAPPGAPPPTHQHPGHPHLLPPNGDPYLPILHVRRDLHHKSLNLSKAGVPPPPHTPPTIITQPESGKPPNQPLHSPHEAMPSFLGSIPMRKRILPAPTLDLMDPHHHPGLGQRTFVDSPSIYALNMSRHPPRQLLGKPPSTETSGATTEKGPPVAAPPIAPPPAPPRRTGFSIEDIMRR</sequence>
<comment type="function">
    <text evidence="4 5 6 7 9">Putative transcription factor. Required for leg joint formation, acting downstream of Notch to pattern the leg tarsal segments. Functions in the terminal pathway during embryogenesis, acting downstream of tll in the posterior of the embryo. Acts in a hierarchy downstream of drm and lin during foregut and hindgut patterning and morphogenesis. Involved in cell rearrangement during elongation of the embryonic hindgut. Regulates expression of hindgut patterning genes to establish the small intestine region of the embryonic hindgut. Required in the foregut for spatially localized gene expression and morphogenesis of the proventriculus.</text>
</comment>
<comment type="subcellular location">
    <subcellularLocation>
        <location evidence="11">Nucleus</location>
    </subcellularLocation>
</comment>
<comment type="tissue specificity">
    <text evidence="4 5 6 7 9 10">Expressed at the termini of the blastoderm embryo in three domains; strongly expressed at the posterior pole, relatively weakly expressed at the anterior pole and expressed in a broad transverse stripe just anterior to the presumptive cephalic furrow. Subsequent to the blastoderm stage, the expression pattern reflects the morphological rearrangements associated with gastrulation. Additionally, at early gastrulation, terminal expression is supplemented by weak expression in seven stripes. These primary stripes are rapidly supplemented by seven secondary stripes. Relatively uniformly expressed throughout the anlagen, primordia and epithelia of the embryonic foregut and hindgut. By stage 13, hindgut expression is greatly reduced but foregut expression remains high until stage 17. Segmentally expressed in the developing leg; present at a subset of segmental boundaries including all proximal joints (coxa/femur, femur/tibia, tibia/t1) and the distal t5/pretarsal boundary.</text>
</comment>
<protein>
    <recommendedName>
        <fullName>Protein bowel</fullName>
    </recommendedName>
    <alternativeName>
        <fullName>Brother of odd with entrails limited</fullName>
    </alternativeName>
</protein>
<keyword id="KW-0217">Developmental protein</keyword>
<keyword id="KW-0479">Metal-binding</keyword>
<keyword id="KW-0539">Nucleus</keyword>
<keyword id="KW-0562">Pair-rule protein</keyword>
<keyword id="KW-0597">Phosphoprotein</keyword>
<keyword id="KW-1185">Reference proteome</keyword>
<keyword id="KW-0677">Repeat</keyword>
<keyword id="KW-0804">Transcription</keyword>
<keyword id="KW-0805">Transcription regulation</keyword>
<keyword id="KW-0862">Zinc</keyword>
<keyword id="KW-0863">Zinc-finger</keyword>
<accession>Q9VQU9</accession>
<accession>Q24219</accession>
<organism>
    <name type="scientific">Drosophila melanogaster</name>
    <name type="common">Fruit fly</name>
    <dbReference type="NCBI Taxonomy" id="7227"/>
    <lineage>
        <taxon>Eukaryota</taxon>
        <taxon>Metazoa</taxon>
        <taxon>Ecdysozoa</taxon>
        <taxon>Arthropoda</taxon>
        <taxon>Hexapoda</taxon>
        <taxon>Insecta</taxon>
        <taxon>Pterygota</taxon>
        <taxon>Neoptera</taxon>
        <taxon>Endopterygota</taxon>
        <taxon>Diptera</taxon>
        <taxon>Brachycera</taxon>
        <taxon>Muscomorpha</taxon>
        <taxon>Ephydroidea</taxon>
        <taxon>Drosophilidae</taxon>
        <taxon>Drosophila</taxon>
        <taxon>Sophophora</taxon>
    </lineage>
</organism>
<proteinExistence type="evidence at protein level"/>
<name>BOWEL_DROME</name>
<evidence type="ECO:0000255" key="1">
    <source>
        <dbReference type="PROSITE-ProRule" id="PRU00042"/>
    </source>
</evidence>
<evidence type="ECO:0000256" key="2">
    <source>
        <dbReference type="SAM" id="MobiDB-lite"/>
    </source>
</evidence>
<evidence type="ECO:0000269" key="3">
    <source>
    </source>
</evidence>
<evidence type="ECO:0000269" key="4">
    <source>
    </source>
</evidence>
<evidence type="ECO:0000269" key="5">
    <source>
    </source>
</evidence>
<evidence type="ECO:0000269" key="6">
    <source>
    </source>
</evidence>
<evidence type="ECO:0000269" key="7">
    <source>
    </source>
</evidence>
<evidence type="ECO:0000269" key="8">
    <source>
    </source>
</evidence>
<evidence type="ECO:0000269" key="9">
    <source>
    </source>
</evidence>
<evidence type="ECO:0000269" key="10">
    <source>
    </source>
</evidence>
<evidence type="ECO:0000305" key="11"/>
<evidence type="ECO:0000312" key="12">
    <source>
        <dbReference type="EMBL" id="AAB17949.1"/>
    </source>
</evidence>
<evidence type="ECO:0000312" key="13">
    <source>
        <dbReference type="EMBL" id="AAF51065.1"/>
    </source>
</evidence>
<evidence type="ECO:0000312" key="14">
    <source>
        <dbReference type="EMBL" id="AAQ23612.1"/>
    </source>
</evidence>
<evidence type="ECO:0000312" key="15">
    <source>
        <dbReference type="FlyBase" id="FBgn0004893"/>
    </source>
</evidence>
<dbReference type="EMBL" id="U58282">
    <property type="protein sequence ID" value="AAB17949.1"/>
    <property type="molecule type" value="mRNA"/>
</dbReference>
<dbReference type="EMBL" id="AE014134">
    <property type="protein sequence ID" value="AAF51065.1"/>
    <property type="molecule type" value="Genomic_DNA"/>
</dbReference>
<dbReference type="EMBL" id="BT010294">
    <property type="protein sequence ID" value="AAQ23612.1"/>
    <property type="molecule type" value="mRNA"/>
</dbReference>
<dbReference type="PIR" id="S70619">
    <property type="entry name" value="S70619"/>
</dbReference>
<dbReference type="RefSeq" id="NP_001245861.1">
    <property type="nucleotide sequence ID" value="NM_001258932.2"/>
</dbReference>
<dbReference type="RefSeq" id="NP_001245862.1">
    <property type="nucleotide sequence ID" value="NM_001258933.2"/>
</dbReference>
<dbReference type="RefSeq" id="NP_001245863.1">
    <property type="nucleotide sequence ID" value="NM_001258934.1"/>
</dbReference>
<dbReference type="RefSeq" id="NP_476883.1">
    <property type="nucleotide sequence ID" value="NM_057535.4"/>
</dbReference>
<dbReference type="RefSeq" id="NP_722939.1">
    <property type="nucleotide sequence ID" value="NM_164556.2"/>
</dbReference>
<dbReference type="RefSeq" id="NP_722940.1">
    <property type="nucleotide sequence ID" value="NM_164557.3"/>
</dbReference>
<dbReference type="RefSeq" id="NP_722941.1">
    <property type="nucleotide sequence ID" value="NM_164558.2"/>
</dbReference>
<dbReference type="SMR" id="Q9VQU9"/>
<dbReference type="BioGRID" id="59806">
    <property type="interactions" value="47"/>
</dbReference>
<dbReference type="ELM" id="Q9VQU9"/>
<dbReference type="FunCoup" id="Q9VQU9">
    <property type="interactions" value="125"/>
</dbReference>
<dbReference type="IntAct" id="Q9VQU9">
    <property type="interactions" value="44"/>
</dbReference>
<dbReference type="STRING" id="7227.FBpp0077181"/>
<dbReference type="GlyGen" id="Q9VQU9">
    <property type="glycosylation" value="1 site"/>
</dbReference>
<dbReference type="iPTMnet" id="Q9VQU9"/>
<dbReference type="PaxDb" id="7227-FBpp0297869"/>
<dbReference type="DNASU" id="33602"/>
<dbReference type="EnsemblMetazoa" id="FBtr0077490">
    <property type="protein sequence ID" value="FBpp0077179"/>
    <property type="gene ID" value="FBgn0004893"/>
</dbReference>
<dbReference type="EnsemblMetazoa" id="FBtr0077491">
    <property type="protein sequence ID" value="FBpp0077180"/>
    <property type="gene ID" value="FBgn0004893"/>
</dbReference>
<dbReference type="EnsemblMetazoa" id="FBtr0077492">
    <property type="protein sequence ID" value="FBpp0077181"/>
    <property type="gene ID" value="FBgn0004893"/>
</dbReference>
<dbReference type="EnsemblMetazoa" id="FBtr0077493">
    <property type="protein sequence ID" value="FBpp0077182"/>
    <property type="gene ID" value="FBgn0004893"/>
</dbReference>
<dbReference type="EnsemblMetazoa" id="FBtr0307027">
    <property type="protein sequence ID" value="FBpp0297870"/>
    <property type="gene ID" value="FBgn0004893"/>
</dbReference>
<dbReference type="EnsemblMetazoa" id="FBtr0307028">
    <property type="protein sequence ID" value="FBpp0297871"/>
    <property type="gene ID" value="FBgn0004893"/>
</dbReference>
<dbReference type="EnsemblMetazoa" id="FBtr0307029">
    <property type="protein sequence ID" value="FBpp0297872"/>
    <property type="gene ID" value="FBgn0004893"/>
</dbReference>
<dbReference type="GeneID" id="33602"/>
<dbReference type="KEGG" id="dme:Dmel_CG10021"/>
<dbReference type="AGR" id="FB:FBgn0004893"/>
<dbReference type="CTD" id="33602"/>
<dbReference type="FlyBase" id="FBgn0004893">
    <property type="gene designation" value="bowl"/>
</dbReference>
<dbReference type="VEuPathDB" id="VectorBase:FBgn0004893"/>
<dbReference type="eggNOG" id="KOG1721">
    <property type="taxonomic scope" value="Eukaryota"/>
</dbReference>
<dbReference type="GeneTree" id="ENSGT00940000168461"/>
<dbReference type="HOGENOM" id="CLU_015566_0_0_1"/>
<dbReference type="InParanoid" id="Q9VQU9"/>
<dbReference type="OMA" id="QFMTSMA"/>
<dbReference type="OrthoDB" id="9451254at2759"/>
<dbReference type="PhylomeDB" id="Q9VQU9"/>
<dbReference type="SignaLink" id="Q9VQU9"/>
<dbReference type="BioGRID-ORCS" id="33602">
    <property type="hits" value="0 hits in 3 CRISPR screens"/>
</dbReference>
<dbReference type="GenomeRNAi" id="33602"/>
<dbReference type="PRO" id="PR:Q9VQU9"/>
<dbReference type="Proteomes" id="UP000000803">
    <property type="component" value="Chromosome 2L"/>
</dbReference>
<dbReference type="Bgee" id="FBgn0004893">
    <property type="expression patterns" value="Expressed in wing disc and 152 other cell types or tissues"/>
</dbReference>
<dbReference type="ExpressionAtlas" id="Q9VQU9">
    <property type="expression patterns" value="baseline and differential"/>
</dbReference>
<dbReference type="GO" id="GO:0005634">
    <property type="term" value="C:nucleus"/>
    <property type="evidence" value="ECO:0000250"/>
    <property type="project" value="FlyBase"/>
</dbReference>
<dbReference type="GO" id="GO:0000981">
    <property type="term" value="F:DNA-binding transcription factor activity, RNA polymerase II-specific"/>
    <property type="evidence" value="ECO:0000250"/>
    <property type="project" value="FlyBase"/>
</dbReference>
<dbReference type="GO" id="GO:0000977">
    <property type="term" value="F:RNA polymerase II transcription regulatory region sequence-specific DNA binding"/>
    <property type="evidence" value="ECO:0000318"/>
    <property type="project" value="GO_Central"/>
</dbReference>
<dbReference type="GO" id="GO:0008270">
    <property type="term" value="F:zinc ion binding"/>
    <property type="evidence" value="ECO:0007669"/>
    <property type="project" value="UniProtKB-KW"/>
</dbReference>
<dbReference type="GO" id="GO:0048617">
    <property type="term" value="P:embryonic foregut morphogenesis"/>
    <property type="evidence" value="ECO:0000315"/>
    <property type="project" value="UniProtKB"/>
</dbReference>
<dbReference type="GO" id="GO:0048619">
    <property type="term" value="P:embryonic hindgut morphogenesis"/>
    <property type="evidence" value="ECO:0000315"/>
    <property type="project" value="UniProtKB"/>
</dbReference>
<dbReference type="GO" id="GO:0009880">
    <property type="term" value="P:embryonic pattern specification"/>
    <property type="evidence" value="ECO:0000315"/>
    <property type="project" value="UniProtKB"/>
</dbReference>
<dbReference type="GO" id="GO:0007442">
    <property type="term" value="P:hindgut morphogenesis"/>
    <property type="evidence" value="ECO:0000315"/>
    <property type="project" value="FlyBase"/>
</dbReference>
<dbReference type="GO" id="GO:0016348">
    <property type="term" value="P:imaginal disc-derived leg joint morphogenesis"/>
    <property type="evidence" value="ECO:0000315"/>
    <property type="project" value="FlyBase"/>
</dbReference>
<dbReference type="GO" id="GO:0007480">
    <property type="term" value="P:imaginal disc-derived leg morphogenesis"/>
    <property type="evidence" value="ECO:0000315"/>
    <property type="project" value="UniProtKB"/>
</dbReference>
<dbReference type="GO" id="GO:0045892">
    <property type="term" value="P:negative regulation of DNA-templated transcription"/>
    <property type="evidence" value="ECO:0000250"/>
    <property type="project" value="UniProtKB"/>
</dbReference>
<dbReference type="GO" id="GO:0000122">
    <property type="term" value="P:negative regulation of transcription by RNA polymerase II"/>
    <property type="evidence" value="ECO:0000250"/>
    <property type="project" value="UniProtKB"/>
</dbReference>
<dbReference type="GO" id="GO:0007366">
    <property type="term" value="P:periodic partitioning by pair rule gene"/>
    <property type="evidence" value="ECO:0007669"/>
    <property type="project" value="UniProtKB-KW"/>
</dbReference>
<dbReference type="GO" id="GO:0045893">
    <property type="term" value="P:positive regulation of DNA-templated transcription"/>
    <property type="evidence" value="ECO:0000250"/>
    <property type="project" value="UniProtKB"/>
</dbReference>
<dbReference type="GO" id="GO:0045944">
    <property type="term" value="P:positive regulation of transcription by RNA polymerase II"/>
    <property type="evidence" value="ECO:0000250"/>
    <property type="project" value="UniProtKB"/>
</dbReference>
<dbReference type="GO" id="GO:0007362">
    <property type="term" value="P:terminal region determination"/>
    <property type="evidence" value="ECO:0000315"/>
    <property type="project" value="UniProtKB"/>
</dbReference>
<dbReference type="GO" id="GO:0035220">
    <property type="term" value="P:wing disc development"/>
    <property type="evidence" value="ECO:0000315"/>
    <property type="project" value="FlyBase"/>
</dbReference>
<dbReference type="FunFam" id="3.30.160.60:FF:000958">
    <property type="entry name" value="Odd skipped"/>
    <property type="match status" value="1"/>
</dbReference>
<dbReference type="FunFam" id="3.30.160.60:FF:000254">
    <property type="entry name" value="Odd-skipped related transciption factor 1"/>
    <property type="match status" value="1"/>
</dbReference>
<dbReference type="FunFam" id="3.30.160.60:FF:000318">
    <property type="entry name" value="Odd-skipped-related transciption factor 2"/>
    <property type="match status" value="1"/>
</dbReference>
<dbReference type="FunFam" id="3.30.160.60:FF:000311">
    <property type="entry name" value="protein odd-skipped-related 2 isoform X1"/>
    <property type="match status" value="1"/>
</dbReference>
<dbReference type="FunFam" id="3.30.160.60:FF:000148">
    <property type="entry name" value="zinc finger protein Gfi-1"/>
    <property type="match status" value="1"/>
</dbReference>
<dbReference type="Gene3D" id="3.30.160.60">
    <property type="entry name" value="Classic Zinc Finger"/>
    <property type="match status" value="5"/>
</dbReference>
<dbReference type="InterPro" id="IPR050717">
    <property type="entry name" value="C2H2-ZF_Transcription_Reg"/>
</dbReference>
<dbReference type="InterPro" id="IPR036236">
    <property type="entry name" value="Znf_C2H2_sf"/>
</dbReference>
<dbReference type="InterPro" id="IPR013087">
    <property type="entry name" value="Znf_C2H2_type"/>
</dbReference>
<dbReference type="PANTHER" id="PTHR14196">
    <property type="entry name" value="ODD-SKIPPED - RELATED"/>
    <property type="match status" value="1"/>
</dbReference>
<dbReference type="PANTHER" id="PTHR14196:SF0">
    <property type="entry name" value="PROTEIN BOWEL"/>
    <property type="match status" value="1"/>
</dbReference>
<dbReference type="Pfam" id="PF00096">
    <property type="entry name" value="zf-C2H2"/>
    <property type="match status" value="5"/>
</dbReference>
<dbReference type="SMART" id="SM00355">
    <property type="entry name" value="ZnF_C2H2"/>
    <property type="match status" value="5"/>
</dbReference>
<dbReference type="SUPFAM" id="SSF57667">
    <property type="entry name" value="beta-beta-alpha zinc fingers"/>
    <property type="match status" value="3"/>
</dbReference>
<dbReference type="PROSITE" id="PS00028">
    <property type="entry name" value="ZINC_FINGER_C2H2_1"/>
    <property type="match status" value="5"/>
</dbReference>
<dbReference type="PROSITE" id="PS50157">
    <property type="entry name" value="ZINC_FINGER_C2H2_2"/>
    <property type="match status" value="5"/>
</dbReference>
<gene>
    <name evidence="15" type="primary">bowl</name>
    <name type="ORF">CG10021</name>
</gene>
<feature type="chain" id="PRO_0000046909" description="Protein bowel">
    <location>
        <begin position="1"/>
        <end position="744"/>
    </location>
</feature>
<feature type="zinc finger region" description="C2H2-type 1" evidence="1">
    <location>
        <begin position="238"/>
        <end position="260"/>
    </location>
</feature>
<feature type="zinc finger region" description="C2H2-type 2" evidence="1">
    <location>
        <begin position="266"/>
        <end position="288"/>
    </location>
</feature>
<feature type="zinc finger region" description="C2H2-type 3" evidence="1">
    <location>
        <begin position="294"/>
        <end position="316"/>
    </location>
</feature>
<feature type="zinc finger region" description="C2H2-type 4" evidence="1">
    <location>
        <begin position="322"/>
        <end position="344"/>
    </location>
</feature>
<feature type="zinc finger region" description="C2H2-type 5" evidence="1">
    <location>
        <begin position="350"/>
        <end position="372"/>
    </location>
</feature>
<feature type="region of interest" description="Disordered" evidence="2">
    <location>
        <begin position="1"/>
        <end position="24"/>
    </location>
</feature>
<feature type="region of interest" description="Disordered" evidence="2">
    <location>
        <begin position="38"/>
        <end position="77"/>
    </location>
</feature>
<feature type="region of interest" description="Disordered" evidence="2">
    <location>
        <begin position="391"/>
        <end position="593"/>
    </location>
</feature>
<feature type="region of interest" description="Disordered" evidence="2">
    <location>
        <begin position="608"/>
        <end position="648"/>
    </location>
</feature>
<feature type="region of interest" description="Disordered" evidence="2">
    <location>
        <begin position="686"/>
        <end position="744"/>
    </location>
</feature>
<feature type="compositionally biased region" description="Low complexity" evidence="2">
    <location>
        <begin position="1"/>
        <end position="10"/>
    </location>
</feature>
<feature type="compositionally biased region" description="Gly residues" evidence="2">
    <location>
        <begin position="53"/>
        <end position="64"/>
    </location>
</feature>
<feature type="compositionally biased region" description="Acidic residues" evidence="2">
    <location>
        <begin position="391"/>
        <end position="403"/>
    </location>
</feature>
<feature type="compositionally biased region" description="Basic and acidic residues" evidence="2">
    <location>
        <begin position="424"/>
        <end position="441"/>
    </location>
</feature>
<feature type="compositionally biased region" description="Acidic residues" evidence="2">
    <location>
        <begin position="442"/>
        <end position="458"/>
    </location>
</feature>
<feature type="compositionally biased region" description="Acidic residues" evidence="2">
    <location>
        <begin position="468"/>
        <end position="482"/>
    </location>
</feature>
<feature type="compositionally biased region" description="Low complexity" evidence="2">
    <location>
        <begin position="492"/>
        <end position="504"/>
    </location>
</feature>
<feature type="compositionally biased region" description="Basic and acidic residues" evidence="2">
    <location>
        <begin position="508"/>
        <end position="522"/>
    </location>
</feature>
<feature type="compositionally biased region" description="Pro residues" evidence="2">
    <location>
        <begin position="561"/>
        <end position="576"/>
    </location>
</feature>
<feature type="compositionally biased region" description="Pro residues" evidence="2">
    <location>
        <begin position="719"/>
        <end position="731"/>
    </location>
</feature>
<feature type="modified residue" description="Phosphoserine" evidence="8">
    <location>
        <position position="395"/>
    </location>
</feature>
<feature type="modified residue" description="Phosphoserine" evidence="8">
    <location>
        <position position="407"/>
    </location>
</feature>
<feature type="mutagenesis site" description="In bowl3; embryonic lethal." evidence="9">
    <original>T</original>
    <variation>M</variation>
    <location>
        <position position="261"/>
    </location>
</feature>
<feature type="mutagenesis site" description="In bowl4; embryonic lethal with 50% larval/pupal escapers." evidence="9">
    <original>D</original>
    <variation>N</variation>
    <location>
        <position position="279"/>
    </location>
</feature>
<feature type="mutagenesis site" description="In bowl2; embryonic lethal. Legs containing clones show fusion and truncation of tarsomeres and disrupted expression of the leg patterning genes bab2, dac and B-H1." evidence="6 9">
    <original>H</original>
    <variation>Y</variation>
    <location>
        <position position="284"/>
    </location>
</feature>
<feature type="mutagenesis site" description="In bowl5; embryonic lethal; when associated with K-345 and P-609." evidence="9">
    <original>T</original>
    <variation>I</variation>
    <location>
        <position position="343"/>
    </location>
</feature>
<feature type="mutagenesis site" description="In bowl5; embryonic lethal; when associated with I-343 and P-609." evidence="9">
    <original>T</original>
    <variation>K</variation>
    <location>
        <position position="345"/>
    </location>
</feature>
<feature type="mutagenesis site" description="In bowl5; embryonic lethal; when associated with I-343 and K-345." evidence="9">
    <original>L</original>
    <variation>P</variation>
    <location>
        <position position="609"/>
    </location>
</feature>
<feature type="sequence conflict" description="In Ref. 1; AAB17949." evidence="11" ref="1">
    <original>F</original>
    <variation>S</variation>
    <location>
        <position position="196"/>
    </location>
</feature>
<feature type="sequence conflict" description="In Ref. 1; AAB17949." evidence="11" ref="1">
    <original>P</original>
    <variation>L</variation>
    <location>
        <position position="634"/>
    </location>
</feature>
<feature type="sequence conflict" description="In Ref. 1; AAB17949." evidence="11" ref="1">
    <original>A</original>
    <variation>P</variation>
    <location>
        <position position="720"/>
    </location>
</feature>
<reference evidence="11 12" key="1">
    <citation type="journal article" date="1996" name="EMBO J.">
        <title>Bowel, an odd-skipped homolog, functions in the terminal pathway during Drosophila embryogenesis.</title>
        <authorList>
            <person name="Wang L."/>
            <person name="Coulter D.E."/>
        </authorList>
    </citation>
    <scope>NUCLEOTIDE SEQUENCE [MRNA]</scope>
    <scope>FUNCTION</scope>
    <scope>TISSUE SPECIFICITY</scope>
    <scope>MUTAGENESIS OF THR-261; ASP-279; HIS-284; THR-343; THR-345 AND LEU-609</scope>
    <source>
        <strain evidence="9">Canton-S</strain>
        <tissue evidence="9">Embryo</tissue>
    </source>
</reference>
<reference evidence="13" key="2">
    <citation type="journal article" date="2000" name="Science">
        <title>The genome sequence of Drosophila melanogaster.</title>
        <authorList>
            <person name="Adams M.D."/>
            <person name="Celniker S.E."/>
            <person name="Holt R.A."/>
            <person name="Evans C.A."/>
            <person name="Gocayne J.D."/>
            <person name="Amanatides P.G."/>
            <person name="Scherer S.E."/>
            <person name="Li P.W."/>
            <person name="Hoskins R.A."/>
            <person name="Galle R.F."/>
            <person name="George R.A."/>
            <person name="Lewis S.E."/>
            <person name="Richards S."/>
            <person name="Ashburner M."/>
            <person name="Henderson S.N."/>
            <person name="Sutton G.G."/>
            <person name="Wortman J.R."/>
            <person name="Yandell M.D."/>
            <person name="Zhang Q."/>
            <person name="Chen L.X."/>
            <person name="Brandon R.C."/>
            <person name="Rogers Y.-H.C."/>
            <person name="Blazej R.G."/>
            <person name="Champe M."/>
            <person name="Pfeiffer B.D."/>
            <person name="Wan K.H."/>
            <person name="Doyle C."/>
            <person name="Baxter E.G."/>
            <person name="Helt G."/>
            <person name="Nelson C.R."/>
            <person name="Miklos G.L.G."/>
            <person name="Abril J.F."/>
            <person name="Agbayani A."/>
            <person name="An H.-J."/>
            <person name="Andrews-Pfannkoch C."/>
            <person name="Baldwin D."/>
            <person name="Ballew R.M."/>
            <person name="Basu A."/>
            <person name="Baxendale J."/>
            <person name="Bayraktaroglu L."/>
            <person name="Beasley E.M."/>
            <person name="Beeson K.Y."/>
            <person name="Benos P.V."/>
            <person name="Berman B.P."/>
            <person name="Bhandari D."/>
            <person name="Bolshakov S."/>
            <person name="Borkova D."/>
            <person name="Botchan M.R."/>
            <person name="Bouck J."/>
            <person name="Brokstein P."/>
            <person name="Brottier P."/>
            <person name="Burtis K.C."/>
            <person name="Busam D.A."/>
            <person name="Butler H."/>
            <person name="Cadieu E."/>
            <person name="Center A."/>
            <person name="Chandra I."/>
            <person name="Cherry J.M."/>
            <person name="Cawley S."/>
            <person name="Dahlke C."/>
            <person name="Davenport L.B."/>
            <person name="Davies P."/>
            <person name="de Pablos B."/>
            <person name="Delcher A."/>
            <person name="Deng Z."/>
            <person name="Mays A.D."/>
            <person name="Dew I."/>
            <person name="Dietz S.M."/>
            <person name="Dodson K."/>
            <person name="Doup L.E."/>
            <person name="Downes M."/>
            <person name="Dugan-Rocha S."/>
            <person name="Dunkov B.C."/>
            <person name="Dunn P."/>
            <person name="Durbin K.J."/>
            <person name="Evangelista C.C."/>
            <person name="Ferraz C."/>
            <person name="Ferriera S."/>
            <person name="Fleischmann W."/>
            <person name="Fosler C."/>
            <person name="Gabrielian A.E."/>
            <person name="Garg N.S."/>
            <person name="Gelbart W.M."/>
            <person name="Glasser K."/>
            <person name="Glodek A."/>
            <person name="Gong F."/>
            <person name="Gorrell J.H."/>
            <person name="Gu Z."/>
            <person name="Guan P."/>
            <person name="Harris M."/>
            <person name="Harris N.L."/>
            <person name="Harvey D.A."/>
            <person name="Heiman T.J."/>
            <person name="Hernandez J.R."/>
            <person name="Houck J."/>
            <person name="Hostin D."/>
            <person name="Houston K.A."/>
            <person name="Howland T.J."/>
            <person name="Wei M.-H."/>
            <person name="Ibegwam C."/>
            <person name="Jalali M."/>
            <person name="Kalush F."/>
            <person name="Karpen G.H."/>
            <person name="Ke Z."/>
            <person name="Kennison J.A."/>
            <person name="Ketchum K.A."/>
            <person name="Kimmel B.E."/>
            <person name="Kodira C.D."/>
            <person name="Kraft C.L."/>
            <person name="Kravitz S."/>
            <person name="Kulp D."/>
            <person name="Lai Z."/>
            <person name="Lasko P."/>
            <person name="Lei Y."/>
            <person name="Levitsky A.A."/>
            <person name="Li J.H."/>
            <person name="Li Z."/>
            <person name="Liang Y."/>
            <person name="Lin X."/>
            <person name="Liu X."/>
            <person name="Mattei B."/>
            <person name="McIntosh T.C."/>
            <person name="McLeod M.P."/>
            <person name="McPherson D."/>
            <person name="Merkulov G."/>
            <person name="Milshina N.V."/>
            <person name="Mobarry C."/>
            <person name="Morris J."/>
            <person name="Moshrefi A."/>
            <person name="Mount S.M."/>
            <person name="Moy M."/>
            <person name="Murphy B."/>
            <person name="Murphy L."/>
            <person name="Muzny D.M."/>
            <person name="Nelson D.L."/>
            <person name="Nelson D.R."/>
            <person name="Nelson K.A."/>
            <person name="Nixon K."/>
            <person name="Nusskern D.R."/>
            <person name="Pacleb J.M."/>
            <person name="Palazzolo M."/>
            <person name="Pittman G.S."/>
            <person name="Pan S."/>
            <person name="Pollard J."/>
            <person name="Puri V."/>
            <person name="Reese M.G."/>
            <person name="Reinert K."/>
            <person name="Remington K."/>
            <person name="Saunders R.D.C."/>
            <person name="Scheeler F."/>
            <person name="Shen H."/>
            <person name="Shue B.C."/>
            <person name="Siden-Kiamos I."/>
            <person name="Simpson M."/>
            <person name="Skupski M.P."/>
            <person name="Smith T.J."/>
            <person name="Spier E."/>
            <person name="Spradling A.C."/>
            <person name="Stapleton M."/>
            <person name="Strong R."/>
            <person name="Sun E."/>
            <person name="Svirskas R."/>
            <person name="Tector C."/>
            <person name="Turner R."/>
            <person name="Venter E."/>
            <person name="Wang A.H."/>
            <person name="Wang X."/>
            <person name="Wang Z.-Y."/>
            <person name="Wassarman D.A."/>
            <person name="Weinstock G.M."/>
            <person name="Weissenbach J."/>
            <person name="Williams S.M."/>
            <person name="Woodage T."/>
            <person name="Worley K.C."/>
            <person name="Wu D."/>
            <person name="Yang S."/>
            <person name="Yao Q.A."/>
            <person name="Ye J."/>
            <person name="Yeh R.-F."/>
            <person name="Zaveri J.S."/>
            <person name="Zhan M."/>
            <person name="Zhang G."/>
            <person name="Zhao Q."/>
            <person name="Zheng L."/>
            <person name="Zheng X.H."/>
            <person name="Zhong F.N."/>
            <person name="Zhong W."/>
            <person name="Zhou X."/>
            <person name="Zhu S.C."/>
            <person name="Zhu X."/>
            <person name="Smith H.O."/>
            <person name="Gibbs R.A."/>
            <person name="Myers E.W."/>
            <person name="Rubin G.M."/>
            <person name="Venter J.C."/>
        </authorList>
    </citation>
    <scope>NUCLEOTIDE SEQUENCE [LARGE SCALE GENOMIC DNA]</scope>
    <source>
        <strain evidence="3">Berkeley</strain>
    </source>
</reference>
<reference evidence="11 13" key="3">
    <citation type="journal article" date="2002" name="Genome Biol.">
        <title>Annotation of the Drosophila melanogaster euchromatic genome: a systematic review.</title>
        <authorList>
            <person name="Misra S."/>
            <person name="Crosby M.A."/>
            <person name="Mungall C.J."/>
            <person name="Matthews B.B."/>
            <person name="Campbell K.S."/>
            <person name="Hradecky P."/>
            <person name="Huang Y."/>
            <person name="Kaminker J.S."/>
            <person name="Millburn G.H."/>
            <person name="Prochnik S.E."/>
            <person name="Smith C.D."/>
            <person name="Tupy J.L."/>
            <person name="Whitfield E.J."/>
            <person name="Bayraktaroglu L."/>
            <person name="Berman B.P."/>
            <person name="Bettencourt B.R."/>
            <person name="Celniker S.E."/>
            <person name="de Grey A.D.N.J."/>
            <person name="Drysdale R.A."/>
            <person name="Harris N.L."/>
            <person name="Richter J."/>
            <person name="Russo S."/>
            <person name="Schroeder A.J."/>
            <person name="Shu S.Q."/>
            <person name="Stapleton M."/>
            <person name="Yamada C."/>
            <person name="Ashburner M."/>
            <person name="Gelbart W.M."/>
            <person name="Rubin G.M."/>
            <person name="Lewis S.E."/>
        </authorList>
    </citation>
    <scope>GENOME REANNOTATION</scope>
    <source>
        <strain>Berkeley</strain>
    </source>
</reference>
<reference evidence="14" key="4">
    <citation type="submission" date="2003-08" db="EMBL/GenBank/DDBJ databases">
        <authorList>
            <person name="Stapleton M."/>
            <person name="Brokstein P."/>
            <person name="Hong L."/>
            <person name="Agbayani A."/>
            <person name="Carlson J.W."/>
            <person name="Champe M."/>
            <person name="Chavez C."/>
            <person name="Dorsett V."/>
            <person name="Dresnek D."/>
            <person name="Farfan D."/>
            <person name="Frise E."/>
            <person name="George R.A."/>
            <person name="Gonzalez M."/>
            <person name="Guarin H."/>
            <person name="Kronmiller B."/>
            <person name="Li P.W."/>
            <person name="Liao G."/>
            <person name="Miranda A."/>
            <person name="Mungall C.J."/>
            <person name="Nunoo J."/>
            <person name="Pacleb J.M."/>
            <person name="Paragas V."/>
            <person name="Park S."/>
            <person name="Patel S."/>
            <person name="Phouanenavong S."/>
            <person name="Wan K.H."/>
            <person name="Yu C."/>
            <person name="Lewis S.E."/>
            <person name="Rubin G.M."/>
            <person name="Celniker S.E."/>
        </authorList>
    </citation>
    <scope>NUCLEOTIDE SEQUENCE [LARGE SCALE MRNA]</scope>
    <source>
        <strain evidence="14">Berkeley</strain>
        <tissue>Embryo</tissue>
    </source>
</reference>
<reference evidence="11 12" key="5">
    <citation type="journal article" date="1996" name="Genetics">
        <title>Comparison of the structure and expression of odd-skipped and two related genes that encode a new family of zinc finger proteins in Drosophila.</title>
        <authorList>
            <person name="Hart M.C."/>
            <person name="Wang L."/>
            <person name="Coulter D.E."/>
        </authorList>
    </citation>
    <scope>NUCLEOTIDE SEQUENCE [MRNA] OF 233-372</scope>
    <scope>TISSUE SPECIFICITY</scope>
    <source>
        <strain evidence="10">Canton-S</strain>
        <tissue evidence="10">Embryo</tissue>
    </source>
</reference>
<reference evidence="11" key="6">
    <citation type="journal article" date="2001" name="Dev. Biol.">
        <title>Drumstick, bowl, and lines are required for patterning and cell rearrangement in the Drosophila embryonic hindgut.</title>
        <authorList>
            <person name="Iwaki D.D."/>
            <person name="Johansen K.A."/>
            <person name="Singer J.B."/>
            <person name="Lengyel J.A."/>
        </authorList>
    </citation>
    <scope>FUNCTION</scope>
    <scope>TISSUE SPECIFICITY</scope>
</reference>
<reference evidence="11" key="7">
    <citation type="journal article" date="2003" name="Development">
        <title>Bowl is required downstream of Notch for elaboration of distal limb patterning.</title>
        <authorList>
            <person name="de Celis Ibeas J.M."/>
            <person name="Bray S.J."/>
        </authorList>
    </citation>
    <scope>FUNCTION</scope>
    <scope>TISSUE SPECIFICITY</scope>
    <scope>MUTAGENESIS OF HIS-284</scope>
</reference>
<reference evidence="11" key="8">
    <citation type="journal article" date="2003" name="Dev. Biol.">
        <title>The odd-skipped family of zinc finger genes promotes Drosophila leg segmentation.</title>
        <authorList>
            <person name="Hao I."/>
            <person name="Green R.B."/>
            <person name="Dunaevsky O."/>
            <person name="Lengyel J.A."/>
            <person name="Rauskolb C."/>
        </authorList>
    </citation>
    <scope>FUNCTION</scope>
    <scope>TISSUE SPECIFICITY</scope>
</reference>
<reference evidence="11" key="9">
    <citation type="journal article" date="2003" name="Mech. Dev.">
        <title>The Drm-Bowl-Lin relief-of-repression hierarchy controls fore- and hindgut patterning and morphogenesis.</title>
        <authorList>
            <person name="Johansen K.A."/>
            <person name="Green R.B."/>
            <person name="Iwaki D.D."/>
            <person name="Hernandez J.B."/>
            <person name="Lengyel J.A."/>
        </authorList>
    </citation>
    <scope>FUNCTION</scope>
    <scope>TISSUE SPECIFICITY</scope>
</reference>
<reference key="10">
    <citation type="journal article" date="2008" name="J. Proteome Res.">
        <title>Phosphoproteome analysis of Drosophila melanogaster embryos.</title>
        <authorList>
            <person name="Zhai B."/>
            <person name="Villen J."/>
            <person name="Beausoleil S.A."/>
            <person name="Mintseris J."/>
            <person name="Gygi S.P."/>
        </authorList>
    </citation>
    <scope>PHOSPHORYLATION [LARGE SCALE ANALYSIS] AT SER-395 AND SER-407</scope>
    <scope>IDENTIFICATION BY MASS SPECTROMETRY</scope>
    <source>
        <tissue>Embryo</tissue>
    </source>
</reference>